<sequence length="1185" mass="128969">MPVSLAVCETANVVNAALRESLGGGGGSGCVAAAAASGRSGSGSSSTAAAAASADEAKIGDPSATDNLQSQIVANAKRVLLAKIEYEEVENYHESVLAKLKSKYIVIKPDNSGAANCSYKTNGASTGKALSSNGHDNTNGVNGSSAATVNGNRKQTVEQSNQNSTTNPNELPKPKRVLYPRENIRIGWKQSDRKWQVGAGMLNVGNTCYLNSTLQALFHIPALANWLVSETAHVENCNISESCGSGGCIICAMAKTLQTTQSNQTAVRPFLIYTKLRQICKHMVVGRQEDAHEFLRFLVEAMEKAYLMRFRNYKELDQLVKETTPLSQIFGGYLRSEVRCLSCNHVSITFQHFQDLLLDIRKADTLEEAFDGYFSRERLEDMGYKCEGCKKKVSATKQFSLERAPITLCIQLKRFSMMGNKLTKQISFKPRIDLSRFAARSPAASTQPLSYRLVSMVTHLGVSQHCGHYTAIGLTESGSYYNFDDSYVRPIAMQSVCNTNAYIMFYELDVASSSINSSSSCSTSVPKLNGLRLNGQHSPSVATTAVAATATSTSASAVSPRFIGPQLPNGYANNNGHVLGAAKTSIQFKSSPQKQPQQQQHNGLLMGANKFQESAQSKHSLVGSLHKGETAANASANAISNANSNKSSCNNNTLTTNSQHQQQHILPISSDEEDEDEDSDDDVDVKANTAPQLPSMPKMFEDAESVAQTAKLKPKTPLKSLVPYESASEEEQEQQQQQQQLLVSPQLQPANPRKRRSGADSSESEDEPPSIMRNGHAKSNGSGNESSTSTSIKSNNNKQKTDAIDEIFKSLNNYKNKHRATAAGTTTADADEDEQQQQQVTKKPSNSSSSLISKNGWQSQNGKAPASPKTPPSPAVIKSKTGIWQITRTDDDNDDDDEDADEEDDADADAEQEEYDDEVVVVETTPSITTKNLNNPFASKPSSADAMPGAKRQKLLNGSAKSAQTPRVGNGYQSEATANGNAVSELLKQTHRGYGTSVLSWTGKTSDLDKQSFDLVCAKRIAGYGDMDGSVGVSSDSNINNSKNIDSNSNIKSLTAPTLLAEAREQRKRDAEDDEENEMDRGRQRKVKSASVKSNNGIPGYNPFQEFESQKRWNGNKSGSFPRFYQNYRQNFQQRNKFKYNRFGGGGAKFQQQRALQRHLAAGGGFTRRQHQSTGHQQQQQQQQS</sequence>
<organism>
    <name type="scientific">Drosophila mojavensis</name>
    <name type="common">Fruit fly</name>
    <dbReference type="NCBI Taxonomy" id="7230"/>
    <lineage>
        <taxon>Eukaryota</taxon>
        <taxon>Metazoa</taxon>
        <taxon>Ecdysozoa</taxon>
        <taxon>Arthropoda</taxon>
        <taxon>Hexapoda</taxon>
        <taxon>Insecta</taxon>
        <taxon>Pterygota</taxon>
        <taxon>Neoptera</taxon>
        <taxon>Endopterygota</taxon>
        <taxon>Diptera</taxon>
        <taxon>Brachycera</taxon>
        <taxon>Muscomorpha</taxon>
        <taxon>Ephydroidea</taxon>
        <taxon>Drosophilidae</taxon>
        <taxon>Drosophila</taxon>
    </lineage>
</organism>
<keyword id="KW-0378">Hydrolase</keyword>
<keyword id="KW-0539">Nucleus</keyword>
<keyword id="KW-0597">Phosphoprotein</keyword>
<keyword id="KW-0645">Protease</keyword>
<keyword id="KW-1185">Reference proteome</keyword>
<keyword id="KW-0788">Thiol protease</keyword>
<keyword id="KW-0833">Ubl conjugation pathway</keyword>
<reference key="1">
    <citation type="journal article" date="2007" name="Nature">
        <title>Evolution of genes and genomes on the Drosophila phylogeny.</title>
        <authorList>
            <consortium name="Drosophila 12 genomes consortium"/>
        </authorList>
    </citation>
    <scope>NUCLEOTIDE SEQUENCE [LARGE SCALE GENOMIC DNA]</scope>
    <source>
        <strain>Tucson 15081-1352.22</strain>
    </source>
</reference>
<comment type="function">
    <text evidence="2">Required for maintaining multiple types of adult stem cells, including male and female germline, epithelial follicle cell and intestinal stem cells. May function as a transcriptional repressor by continually deubiquiting histone H2B at the promoters of genes critical for cellular differentiation, thereby preventing histone H3 'Lys-4' trimethylation (H3K4). Controls selective autophagy activation by ubiquitinated proteins.</text>
</comment>
<comment type="catalytic activity">
    <reaction>
        <text>Thiol-dependent hydrolysis of ester, thioester, amide, peptide and isopeptide bonds formed by the C-terminal Gly of ubiquitin (a 76-residue protein attached to proteins as an intracellular targeting signal).</text>
        <dbReference type="EC" id="3.4.19.12"/>
    </reaction>
</comment>
<comment type="subunit">
    <text evidence="1">Interacts with atms/PAF1, but not with CycT.</text>
</comment>
<comment type="subcellular location">
    <subcellularLocation>
        <location evidence="1">Nucleus</location>
        <location evidence="1">Nucleolus</location>
    </subcellularLocation>
</comment>
<comment type="similarity">
    <text evidence="6">Belongs to the peptidase C19 family.</text>
</comment>
<protein>
    <recommendedName>
        <fullName>Ubiquitin carboxyl-terminal hydrolase 36</fullName>
        <ecNumber>3.4.19.12</ecNumber>
    </recommendedName>
    <alternativeName>
        <fullName>Deubiquitinating enzyme 36</fullName>
    </alternativeName>
    <alternativeName>
        <fullName>Protein scrawny</fullName>
    </alternativeName>
    <alternativeName>
        <fullName>Ubiquitin thioesterase 36</fullName>
    </alternativeName>
    <alternativeName>
        <fullName>Ubiquitin-specific-processing protease 36</fullName>
    </alternativeName>
</protein>
<feature type="chain" id="PRO_0000378499" description="Ubiquitin carboxyl-terminal hydrolase 36">
    <location>
        <begin position="1"/>
        <end position="1185"/>
    </location>
</feature>
<feature type="domain" description="USP">
    <location>
        <begin position="199"/>
        <end position="509"/>
    </location>
</feature>
<feature type="region of interest" description="Disordered" evidence="5">
    <location>
        <begin position="126"/>
        <end position="174"/>
    </location>
</feature>
<feature type="region of interest" description="Disordered" evidence="5">
    <location>
        <begin position="642"/>
        <end position="804"/>
    </location>
</feature>
<feature type="region of interest" description="Disordered" evidence="5">
    <location>
        <begin position="818"/>
        <end position="975"/>
    </location>
</feature>
<feature type="region of interest" description="Disordered" evidence="5">
    <location>
        <begin position="1056"/>
        <end position="1122"/>
    </location>
</feature>
<feature type="region of interest" description="Disordered" evidence="5">
    <location>
        <begin position="1136"/>
        <end position="1185"/>
    </location>
</feature>
<feature type="compositionally biased region" description="Polar residues" evidence="5">
    <location>
        <begin position="126"/>
        <end position="169"/>
    </location>
</feature>
<feature type="compositionally biased region" description="Low complexity" evidence="5">
    <location>
        <begin position="642"/>
        <end position="658"/>
    </location>
</feature>
<feature type="compositionally biased region" description="Acidic residues" evidence="5">
    <location>
        <begin position="670"/>
        <end position="683"/>
    </location>
</feature>
<feature type="compositionally biased region" description="Low complexity" evidence="5">
    <location>
        <begin position="778"/>
        <end position="797"/>
    </location>
</feature>
<feature type="compositionally biased region" description="Low complexity" evidence="5">
    <location>
        <begin position="836"/>
        <end position="853"/>
    </location>
</feature>
<feature type="compositionally biased region" description="Acidic residues" evidence="5">
    <location>
        <begin position="891"/>
        <end position="920"/>
    </location>
</feature>
<feature type="compositionally biased region" description="Polar residues" evidence="5">
    <location>
        <begin position="924"/>
        <end position="942"/>
    </location>
</feature>
<feature type="compositionally biased region" description="Polar residues" evidence="5">
    <location>
        <begin position="959"/>
        <end position="975"/>
    </location>
</feature>
<feature type="compositionally biased region" description="Basic and acidic residues" evidence="5">
    <location>
        <begin position="1062"/>
        <end position="1071"/>
    </location>
</feature>
<feature type="compositionally biased region" description="Low complexity" evidence="5">
    <location>
        <begin position="1151"/>
        <end position="1161"/>
    </location>
</feature>
<feature type="compositionally biased region" description="Low complexity" evidence="5">
    <location>
        <begin position="1172"/>
        <end position="1185"/>
    </location>
</feature>
<feature type="active site" description="Nucleophile" evidence="3 4">
    <location>
        <position position="208"/>
    </location>
</feature>
<feature type="active site" description="Proton acceptor" evidence="3 4">
    <location>
        <position position="468"/>
    </location>
</feature>
<feature type="modified residue" description="Phosphoserine" evidence="1">
    <location>
        <position position="552"/>
    </location>
</feature>
<feature type="modified residue" description="Phosphoserine" evidence="1">
    <location>
        <position position="554"/>
    </location>
</feature>
<feature type="modified residue" description="Phosphothreonine" evidence="1">
    <location>
        <position position="716"/>
    </location>
</feature>
<feature type="modified residue" description="Phosphoserine" evidence="1">
    <location>
        <position position="726"/>
    </location>
</feature>
<feature type="modified residue" description="Phosphoserine" evidence="1">
    <location>
        <position position="728"/>
    </location>
</feature>
<feature type="modified residue" description="Phosphoserine" evidence="1">
    <location>
        <position position="867"/>
    </location>
</feature>
<feature type="modified residue" description="Phosphothreonine" evidence="1">
    <location>
        <position position="870"/>
    </location>
</feature>
<feature type="modified residue" description="Phosphoserine" evidence="1">
    <location>
        <position position="873"/>
    </location>
</feature>
<feature type="modified residue" description="Phosphothreonine" evidence="1">
    <location>
        <position position="925"/>
    </location>
</feature>
<evidence type="ECO:0000250" key="1"/>
<evidence type="ECO:0000250" key="2">
    <source>
        <dbReference type="UniProtKB" id="Q9VRP5"/>
    </source>
</evidence>
<evidence type="ECO:0000255" key="3">
    <source>
        <dbReference type="PROSITE-ProRule" id="PRU10092"/>
    </source>
</evidence>
<evidence type="ECO:0000255" key="4">
    <source>
        <dbReference type="PROSITE-ProRule" id="PRU10093"/>
    </source>
</evidence>
<evidence type="ECO:0000256" key="5">
    <source>
        <dbReference type="SAM" id="MobiDB-lite"/>
    </source>
</evidence>
<evidence type="ECO:0000305" key="6"/>
<accession>B4KXJ5</accession>
<proteinExistence type="inferred from homology"/>
<name>UBP36_DROMO</name>
<dbReference type="EC" id="3.4.19.12"/>
<dbReference type="EMBL" id="CH933809">
    <property type="protein sequence ID" value="EDW18681.1"/>
    <property type="molecule type" value="Genomic_DNA"/>
</dbReference>
<dbReference type="SMR" id="B4KXJ5"/>
<dbReference type="FunCoup" id="B4KXJ5">
    <property type="interactions" value="525"/>
</dbReference>
<dbReference type="GeneID" id="6582504"/>
<dbReference type="KEGG" id="dmo:Dmoj_GI13361"/>
<dbReference type="CTD" id="38648"/>
<dbReference type="eggNOG" id="KOG1865">
    <property type="taxonomic scope" value="Eukaryota"/>
</dbReference>
<dbReference type="HOGENOM" id="CLU_006208_0_0_1"/>
<dbReference type="InParanoid" id="B4KXJ5"/>
<dbReference type="OMA" id="VCAMAKT"/>
<dbReference type="OrthoDB" id="420187at2759"/>
<dbReference type="PhylomeDB" id="B4KXJ5"/>
<dbReference type="ChiTaRS" id="scny">
    <property type="organism name" value="fly"/>
</dbReference>
<dbReference type="Proteomes" id="UP000009192">
    <property type="component" value="Unassembled WGS sequence"/>
</dbReference>
<dbReference type="GO" id="GO:0005829">
    <property type="term" value="C:cytosol"/>
    <property type="evidence" value="ECO:0007669"/>
    <property type="project" value="TreeGrafter"/>
</dbReference>
<dbReference type="GO" id="GO:0005730">
    <property type="term" value="C:nucleolus"/>
    <property type="evidence" value="ECO:0000250"/>
    <property type="project" value="UniProtKB"/>
</dbReference>
<dbReference type="GO" id="GO:0004843">
    <property type="term" value="F:cysteine-type deubiquitinase activity"/>
    <property type="evidence" value="ECO:0000250"/>
    <property type="project" value="UniProtKB"/>
</dbReference>
<dbReference type="GO" id="GO:0061578">
    <property type="term" value="F:K63-linked deubiquitinase activity"/>
    <property type="evidence" value="ECO:0007669"/>
    <property type="project" value="EnsemblMetazoa"/>
</dbReference>
<dbReference type="GO" id="GO:0030718">
    <property type="term" value="P:germ-line stem cell population maintenance"/>
    <property type="evidence" value="ECO:0000250"/>
    <property type="project" value="UniProtKB"/>
</dbReference>
<dbReference type="GO" id="GO:0031507">
    <property type="term" value="P:heterochromatin formation"/>
    <property type="evidence" value="ECO:0007669"/>
    <property type="project" value="EnsemblMetazoa"/>
</dbReference>
<dbReference type="GO" id="GO:0002785">
    <property type="term" value="P:negative regulation of antimicrobial peptide production"/>
    <property type="evidence" value="ECO:0007669"/>
    <property type="project" value="EnsemblMetazoa"/>
</dbReference>
<dbReference type="GO" id="GO:0045824">
    <property type="term" value="P:negative regulation of innate immune response"/>
    <property type="evidence" value="ECO:0007669"/>
    <property type="project" value="EnsemblMetazoa"/>
</dbReference>
<dbReference type="GO" id="GO:0016242">
    <property type="term" value="P:negative regulation of macroautophagy"/>
    <property type="evidence" value="ECO:0000250"/>
    <property type="project" value="UniProtKB"/>
</dbReference>
<dbReference type="GO" id="GO:0061060">
    <property type="term" value="P:negative regulation of peptidoglycan recognition protein signaling pathway"/>
    <property type="evidence" value="ECO:0007669"/>
    <property type="project" value="EnsemblMetazoa"/>
</dbReference>
<dbReference type="GO" id="GO:1901800">
    <property type="term" value="P:positive regulation of proteasomal protein catabolic process"/>
    <property type="evidence" value="ECO:0007669"/>
    <property type="project" value="EnsemblMetazoa"/>
</dbReference>
<dbReference type="GO" id="GO:0016579">
    <property type="term" value="P:protein deubiquitination"/>
    <property type="evidence" value="ECO:0000250"/>
    <property type="project" value="UniProtKB"/>
</dbReference>
<dbReference type="GO" id="GO:0006508">
    <property type="term" value="P:proteolysis"/>
    <property type="evidence" value="ECO:0007669"/>
    <property type="project" value="UniProtKB-KW"/>
</dbReference>
<dbReference type="GO" id="GO:0042981">
    <property type="term" value="P:regulation of apoptotic process"/>
    <property type="evidence" value="ECO:0007669"/>
    <property type="project" value="EnsemblMetazoa"/>
</dbReference>
<dbReference type="GO" id="GO:0035019">
    <property type="term" value="P:somatic stem cell population maintenance"/>
    <property type="evidence" value="ECO:0000250"/>
    <property type="project" value="UniProtKB"/>
</dbReference>
<dbReference type="CDD" id="cd02661">
    <property type="entry name" value="Peptidase_C19E"/>
    <property type="match status" value="1"/>
</dbReference>
<dbReference type="FunFam" id="3.90.70.10:FF:000085">
    <property type="entry name" value="Ubiquitin carboxyl-terminal hydrolase 36"/>
    <property type="match status" value="1"/>
</dbReference>
<dbReference type="Gene3D" id="3.90.70.10">
    <property type="entry name" value="Cysteine proteinases"/>
    <property type="match status" value="1"/>
</dbReference>
<dbReference type="InterPro" id="IPR038765">
    <property type="entry name" value="Papain-like_cys_pep_sf"/>
</dbReference>
<dbReference type="InterPro" id="IPR050164">
    <property type="entry name" value="Peptidase_C19"/>
</dbReference>
<dbReference type="InterPro" id="IPR001394">
    <property type="entry name" value="Peptidase_C19_UCH"/>
</dbReference>
<dbReference type="InterPro" id="IPR018200">
    <property type="entry name" value="USP_CS"/>
</dbReference>
<dbReference type="InterPro" id="IPR028889">
    <property type="entry name" value="USP_dom"/>
</dbReference>
<dbReference type="PANTHER" id="PTHR24006">
    <property type="entry name" value="UBIQUITIN CARBOXYL-TERMINAL HYDROLASE"/>
    <property type="match status" value="1"/>
</dbReference>
<dbReference type="PANTHER" id="PTHR24006:SF758">
    <property type="entry name" value="UBIQUITIN CARBOXYL-TERMINAL HYDROLASE 36"/>
    <property type="match status" value="1"/>
</dbReference>
<dbReference type="Pfam" id="PF00443">
    <property type="entry name" value="UCH"/>
    <property type="match status" value="1"/>
</dbReference>
<dbReference type="SUPFAM" id="SSF54001">
    <property type="entry name" value="Cysteine proteinases"/>
    <property type="match status" value="1"/>
</dbReference>
<dbReference type="PROSITE" id="PS00972">
    <property type="entry name" value="USP_1"/>
    <property type="match status" value="1"/>
</dbReference>
<dbReference type="PROSITE" id="PS00973">
    <property type="entry name" value="USP_2"/>
    <property type="match status" value="1"/>
</dbReference>
<dbReference type="PROSITE" id="PS50235">
    <property type="entry name" value="USP_3"/>
    <property type="match status" value="1"/>
</dbReference>
<gene>
    <name type="primary">Usp36</name>
    <name type="synonym">scny</name>
    <name type="ORF">GI13361</name>
</gene>